<accession>Q8K0W9</accession>
<comment type="function">
    <text evidence="1">Required for the first step of diphthamide biosynthesis, a post-translational modification of histidine which occurs in elongation factor 2. DPH1 and DPH2 transfer a 3-amino-3-carboxypropyl (ACP) group from S-adenosyl-L-methionine (SAM) to a histidine residue, the reaction is assisted by a reduction system comprising DPH3 and a NADH-dependent reductase. Acts as an electron donor to reduce the Fe-S cluster in DPH1-DPH2 keeping the [4Fe-4S] clusters in the active and reduced state. Restores iron to DPH1-DPH2 iron-sulfur clusters which have degraded from [4Fe-4S] to [3Fe-4S] by donating an iron atom to reform [4Fe-4S] clusters, in a manner dependent on the presence of elongation factor 2 and SAM. Associates with the elongator complex and is required for tRNA Wobble base modifications mediated by the elongator complex. The elongator complex is required for multiple tRNA modifications, including mcm5U (5-methoxycarbonylmethyl uridine), mcm5s 2U (5-methoxycarbonylmethyl-2-thiouridine), and ncm5U (5-carbamoylmethyl uridine).</text>
</comment>
<comment type="catalytic activity">
    <reaction evidence="1">
        <text>[3Fe-4S](1+)-[protein] + Fe(2+)-[Dph3] = [3Fe-4S](0)-[protein] + Fe(3+)-[Dph3]</text>
        <dbReference type="Rhea" id="RHEA:71235"/>
        <dbReference type="Rhea" id="RHEA-COMP:17996"/>
        <dbReference type="Rhea" id="RHEA-COMP:17997"/>
        <dbReference type="Rhea" id="RHEA-COMP:18002"/>
        <dbReference type="Rhea" id="RHEA-COMP:18003"/>
        <dbReference type="ChEBI" id="CHEBI:29033"/>
        <dbReference type="ChEBI" id="CHEBI:29034"/>
        <dbReference type="ChEBI" id="CHEBI:33751"/>
        <dbReference type="ChEBI" id="CHEBI:47402"/>
        <dbReference type="ChEBI" id="CHEBI:83228"/>
    </reaction>
</comment>
<comment type="catalytic activity">
    <reaction evidence="1">
        <text>2 [3Fe-4S](0)-[protein] + 2 Fe(2+)-[Dph3] + NADH = 2 [4Fe-4S](1+)-[protein] + 2 [Dph3] + NAD(+) + H(+)</text>
        <dbReference type="Rhea" id="RHEA:71239"/>
        <dbReference type="Rhea" id="RHEA-COMP:17997"/>
        <dbReference type="Rhea" id="RHEA-COMP:17998"/>
        <dbReference type="Rhea" id="RHEA-COMP:18001"/>
        <dbReference type="Rhea" id="RHEA-COMP:18002"/>
        <dbReference type="ChEBI" id="CHEBI:15378"/>
        <dbReference type="ChEBI" id="CHEBI:29033"/>
        <dbReference type="ChEBI" id="CHEBI:33723"/>
        <dbReference type="ChEBI" id="CHEBI:47402"/>
        <dbReference type="ChEBI" id="CHEBI:57540"/>
        <dbReference type="ChEBI" id="CHEBI:57945"/>
        <dbReference type="ChEBI" id="CHEBI:83228"/>
    </reaction>
</comment>
<comment type="cofactor">
    <cofactor evidence="1">
        <name>Fe(2+)</name>
        <dbReference type="ChEBI" id="CHEBI:29033"/>
    </cofactor>
</comment>
<comment type="pathway">
    <text evidence="9">Protein modification; peptidyl-diphthamide biosynthesis.</text>
</comment>
<comment type="subunit">
    <text evidence="1 2">Component of the 2-(3-amino-3-carboxypropyl)histidine synthase complex composed of DPH1, DPH2, DPH3 and a NADH-dependent reductase (By similarity). Interacts with SERGEF (By similarity).</text>
</comment>
<comment type="subcellular location">
    <subcellularLocation>
        <location evidence="2">Cytoplasm</location>
    </subcellularLocation>
    <subcellularLocation>
        <location evidence="2">Nucleus</location>
    </subcellularLocation>
</comment>
<comment type="tissue specificity">
    <text evidence="4">Widely expressed with highest levels in heart, liver, kidney and testis.</text>
</comment>
<comment type="developmental stage">
    <text evidence="4">In the embryo, expressed during all stages of development.</text>
</comment>
<comment type="domain">
    <text evidence="1">The DPH-type metal-binding (MB) domain can also bind zinc. However, iron is the physiological binding partner as zinc binding impairs the protein electron donor function.</text>
</comment>
<comment type="disruption phenotype">
    <text evidence="5 6">Embryonic lethal about 11.5 days after fertilization (PubMed:16648478). Decreases metastasis in a mouse model of melanoma (PubMed:23185508).</text>
</comment>
<comment type="similarity">
    <text evidence="9">Belongs to the DPH3 family.</text>
</comment>
<keyword id="KW-0002">3D-structure</keyword>
<keyword id="KW-0963">Cytoplasm</keyword>
<keyword id="KW-0408">Iron</keyword>
<keyword id="KW-0479">Metal-binding</keyword>
<keyword id="KW-0539">Nucleus</keyword>
<keyword id="KW-1185">Reference proteome</keyword>
<gene>
    <name evidence="7" type="primary">Dph3</name>
    <name evidence="8" type="synonym">Desr1</name>
    <name type="synonym">Zcsl2</name>
</gene>
<name>DPH3_MOUSE</name>
<feature type="chain" id="PRO_0000082621" description="Diphthamide biosynthesis protein 3">
    <location>
        <begin position="1"/>
        <end position="82"/>
    </location>
</feature>
<feature type="domain" description="DPH-type MB" evidence="3">
    <location>
        <begin position="4"/>
        <end position="60"/>
    </location>
</feature>
<feature type="binding site" evidence="2">
    <location>
        <position position="26"/>
    </location>
    <ligand>
        <name>Fe cation</name>
        <dbReference type="ChEBI" id="CHEBI:24875"/>
    </ligand>
</feature>
<feature type="binding site" evidence="2">
    <location>
        <position position="28"/>
    </location>
    <ligand>
        <name>Fe cation</name>
        <dbReference type="ChEBI" id="CHEBI:24875"/>
    </ligand>
</feature>
<feature type="binding site" evidence="2">
    <location>
        <position position="48"/>
    </location>
    <ligand>
        <name>Fe cation</name>
        <dbReference type="ChEBI" id="CHEBI:24875"/>
    </ligand>
</feature>
<feature type="binding site" evidence="2">
    <location>
        <position position="51"/>
    </location>
    <ligand>
        <name>Fe cation</name>
        <dbReference type="ChEBI" id="CHEBI:24875"/>
    </ligand>
</feature>
<feature type="strand" evidence="10">
    <location>
        <begin position="7"/>
        <end position="9"/>
    </location>
</feature>
<feature type="helix" evidence="10">
    <location>
        <begin position="10"/>
        <end position="12"/>
    </location>
</feature>
<feature type="turn" evidence="10">
    <location>
        <begin position="17"/>
        <end position="19"/>
    </location>
</feature>
<feature type="strand" evidence="10">
    <location>
        <begin position="21"/>
        <end position="24"/>
    </location>
</feature>
<feature type="strand" evidence="10">
    <location>
        <begin position="27"/>
        <end position="30"/>
    </location>
</feature>
<feature type="strand" evidence="10">
    <location>
        <begin position="32"/>
        <end position="35"/>
    </location>
</feature>
<feature type="helix" evidence="10">
    <location>
        <begin position="36"/>
        <end position="40"/>
    </location>
</feature>
<feature type="strand" evidence="10">
    <location>
        <begin position="45"/>
        <end position="47"/>
    </location>
</feature>
<feature type="turn" evidence="10">
    <location>
        <begin position="49"/>
        <end position="51"/>
    </location>
</feature>
<feature type="strand" evidence="10">
    <location>
        <begin position="54"/>
        <end position="58"/>
    </location>
</feature>
<feature type="helix" evidence="10">
    <location>
        <begin position="61"/>
        <end position="65"/>
    </location>
</feature>
<feature type="turn" evidence="10">
    <location>
        <begin position="66"/>
        <end position="68"/>
    </location>
</feature>
<reference key="1">
    <citation type="journal article" date="2005" name="Science">
        <title>The transcriptional landscape of the mammalian genome.</title>
        <authorList>
            <person name="Carninci P."/>
            <person name="Kasukawa T."/>
            <person name="Katayama S."/>
            <person name="Gough J."/>
            <person name="Frith M.C."/>
            <person name="Maeda N."/>
            <person name="Oyama R."/>
            <person name="Ravasi T."/>
            <person name="Lenhard B."/>
            <person name="Wells C."/>
            <person name="Kodzius R."/>
            <person name="Shimokawa K."/>
            <person name="Bajic V.B."/>
            <person name="Brenner S.E."/>
            <person name="Batalov S."/>
            <person name="Forrest A.R."/>
            <person name="Zavolan M."/>
            <person name="Davis M.J."/>
            <person name="Wilming L.G."/>
            <person name="Aidinis V."/>
            <person name="Allen J.E."/>
            <person name="Ambesi-Impiombato A."/>
            <person name="Apweiler R."/>
            <person name="Aturaliya R.N."/>
            <person name="Bailey T.L."/>
            <person name="Bansal M."/>
            <person name="Baxter L."/>
            <person name="Beisel K.W."/>
            <person name="Bersano T."/>
            <person name="Bono H."/>
            <person name="Chalk A.M."/>
            <person name="Chiu K.P."/>
            <person name="Choudhary V."/>
            <person name="Christoffels A."/>
            <person name="Clutterbuck D.R."/>
            <person name="Crowe M.L."/>
            <person name="Dalla E."/>
            <person name="Dalrymple B.P."/>
            <person name="de Bono B."/>
            <person name="Della Gatta G."/>
            <person name="di Bernardo D."/>
            <person name="Down T."/>
            <person name="Engstrom P."/>
            <person name="Fagiolini M."/>
            <person name="Faulkner G."/>
            <person name="Fletcher C.F."/>
            <person name="Fukushima T."/>
            <person name="Furuno M."/>
            <person name="Futaki S."/>
            <person name="Gariboldi M."/>
            <person name="Georgii-Hemming P."/>
            <person name="Gingeras T.R."/>
            <person name="Gojobori T."/>
            <person name="Green R.E."/>
            <person name="Gustincich S."/>
            <person name="Harbers M."/>
            <person name="Hayashi Y."/>
            <person name="Hensch T.K."/>
            <person name="Hirokawa N."/>
            <person name="Hill D."/>
            <person name="Huminiecki L."/>
            <person name="Iacono M."/>
            <person name="Ikeo K."/>
            <person name="Iwama A."/>
            <person name="Ishikawa T."/>
            <person name="Jakt M."/>
            <person name="Kanapin A."/>
            <person name="Katoh M."/>
            <person name="Kawasawa Y."/>
            <person name="Kelso J."/>
            <person name="Kitamura H."/>
            <person name="Kitano H."/>
            <person name="Kollias G."/>
            <person name="Krishnan S.P."/>
            <person name="Kruger A."/>
            <person name="Kummerfeld S.K."/>
            <person name="Kurochkin I.V."/>
            <person name="Lareau L.F."/>
            <person name="Lazarevic D."/>
            <person name="Lipovich L."/>
            <person name="Liu J."/>
            <person name="Liuni S."/>
            <person name="McWilliam S."/>
            <person name="Madan Babu M."/>
            <person name="Madera M."/>
            <person name="Marchionni L."/>
            <person name="Matsuda H."/>
            <person name="Matsuzawa S."/>
            <person name="Miki H."/>
            <person name="Mignone F."/>
            <person name="Miyake S."/>
            <person name="Morris K."/>
            <person name="Mottagui-Tabar S."/>
            <person name="Mulder N."/>
            <person name="Nakano N."/>
            <person name="Nakauchi H."/>
            <person name="Ng P."/>
            <person name="Nilsson R."/>
            <person name="Nishiguchi S."/>
            <person name="Nishikawa S."/>
            <person name="Nori F."/>
            <person name="Ohara O."/>
            <person name="Okazaki Y."/>
            <person name="Orlando V."/>
            <person name="Pang K.C."/>
            <person name="Pavan W.J."/>
            <person name="Pavesi G."/>
            <person name="Pesole G."/>
            <person name="Petrovsky N."/>
            <person name="Piazza S."/>
            <person name="Reed J."/>
            <person name="Reid J.F."/>
            <person name="Ring B.Z."/>
            <person name="Ringwald M."/>
            <person name="Rost B."/>
            <person name="Ruan Y."/>
            <person name="Salzberg S.L."/>
            <person name="Sandelin A."/>
            <person name="Schneider C."/>
            <person name="Schoenbach C."/>
            <person name="Sekiguchi K."/>
            <person name="Semple C.A."/>
            <person name="Seno S."/>
            <person name="Sessa L."/>
            <person name="Sheng Y."/>
            <person name="Shibata Y."/>
            <person name="Shimada H."/>
            <person name="Shimada K."/>
            <person name="Silva D."/>
            <person name="Sinclair B."/>
            <person name="Sperling S."/>
            <person name="Stupka E."/>
            <person name="Sugiura K."/>
            <person name="Sultana R."/>
            <person name="Takenaka Y."/>
            <person name="Taki K."/>
            <person name="Tammoja K."/>
            <person name="Tan S.L."/>
            <person name="Tang S."/>
            <person name="Taylor M.S."/>
            <person name="Tegner J."/>
            <person name="Teichmann S.A."/>
            <person name="Ueda H.R."/>
            <person name="van Nimwegen E."/>
            <person name="Verardo R."/>
            <person name="Wei C.L."/>
            <person name="Yagi K."/>
            <person name="Yamanishi H."/>
            <person name="Zabarovsky E."/>
            <person name="Zhu S."/>
            <person name="Zimmer A."/>
            <person name="Hide W."/>
            <person name="Bult C."/>
            <person name="Grimmond S.M."/>
            <person name="Teasdale R.D."/>
            <person name="Liu E.T."/>
            <person name="Brusic V."/>
            <person name="Quackenbush J."/>
            <person name="Wahlestedt C."/>
            <person name="Mattick J.S."/>
            <person name="Hume D.A."/>
            <person name="Kai C."/>
            <person name="Sasaki D."/>
            <person name="Tomaru Y."/>
            <person name="Fukuda S."/>
            <person name="Kanamori-Katayama M."/>
            <person name="Suzuki M."/>
            <person name="Aoki J."/>
            <person name="Arakawa T."/>
            <person name="Iida J."/>
            <person name="Imamura K."/>
            <person name="Itoh M."/>
            <person name="Kato T."/>
            <person name="Kawaji H."/>
            <person name="Kawagashira N."/>
            <person name="Kawashima T."/>
            <person name="Kojima M."/>
            <person name="Kondo S."/>
            <person name="Konno H."/>
            <person name="Nakano K."/>
            <person name="Ninomiya N."/>
            <person name="Nishio T."/>
            <person name="Okada M."/>
            <person name="Plessy C."/>
            <person name="Shibata K."/>
            <person name="Shiraki T."/>
            <person name="Suzuki S."/>
            <person name="Tagami M."/>
            <person name="Waki K."/>
            <person name="Watahiki A."/>
            <person name="Okamura-Oho Y."/>
            <person name="Suzuki H."/>
            <person name="Kawai J."/>
            <person name="Hayashizaki Y."/>
        </authorList>
    </citation>
    <scope>NUCLEOTIDE SEQUENCE [LARGE SCALE MRNA]</scope>
    <source>
        <strain>C57BL/6J</strain>
        <tissue>Embryo</tissue>
        <tissue>Head</tissue>
    </source>
</reference>
<reference key="2">
    <citation type="journal article" date="2004" name="Genome Res.">
        <title>The status, quality, and expansion of the NIH full-length cDNA project: the Mammalian Gene Collection (MGC).</title>
        <authorList>
            <consortium name="The MGC Project Team"/>
        </authorList>
    </citation>
    <scope>NUCLEOTIDE SEQUENCE [LARGE SCALE MRNA]</scope>
    <source>
        <strain>FVB/N</strain>
        <tissue>Salivary gland</tissue>
    </source>
</reference>
<reference key="3">
    <citation type="journal article" date="2003" name="Mol. Cell">
        <title>Retroviral insertional mutagenesis identifies a small protein required for synthesis of diphthamide, the target of bacterial ADP-ribosylating toxins.</title>
        <authorList>
            <person name="Liu S."/>
            <person name="Leppla S.H."/>
        </authorList>
    </citation>
    <scope>TISSUE SPECIFICITY</scope>
    <scope>DEVELOPMENTAL STAGE</scope>
</reference>
<reference key="4">
    <citation type="journal article" date="2006" name="Mol. Cell. Biol.">
        <title>Dph3, a small protein required for diphthamide biosynthesis, is essential in mouse development.</title>
        <authorList>
            <person name="Liu S."/>
            <person name="Wiggins J.F."/>
            <person name="Sreenath T."/>
            <person name="Kulkarni A.B."/>
            <person name="Ward J.M."/>
            <person name="Leppla S.H."/>
        </authorList>
    </citation>
    <scope>FUNCTION</scope>
    <scope>DISRUPTION PHENOTYPE</scope>
</reference>
<reference key="5">
    <citation type="journal article" date="2012" name="PLoS ONE">
        <title>Silencing of diphthamide synthesis 3 (Dph3) reduces metastasis of murine melanoma.</title>
        <authorList>
            <person name="Wang L."/>
            <person name="Shi Y."/>
            <person name="Ju P."/>
            <person name="Liu R."/>
            <person name="Yeo S.P."/>
            <person name="Xia Y."/>
            <person name="Owlanj H."/>
            <person name="Feng Z."/>
        </authorList>
    </citation>
    <scope>DISRUPTION PHENOTYPE</scope>
    <source>
        <strain>C57BL/6J</strain>
    </source>
</reference>
<reference key="6">
    <citation type="submission" date="2005-08" db="PDB data bank">
        <title>Solution structure of the mouse Desr1.</title>
        <authorList>
            <consortium name="RIKEN structural genomics initiative (RSGI)"/>
        </authorList>
    </citation>
    <scope>STRUCTURE BY NMR OF 1-70 IN COMPLEX WITH ZINC IONS</scope>
</reference>
<dbReference type="EMBL" id="AK048097">
    <property type="protein sequence ID" value="BAC33240.1"/>
    <property type="molecule type" value="mRNA"/>
</dbReference>
<dbReference type="EMBL" id="AK011448">
    <property type="protein sequence ID" value="BAC25335.1"/>
    <property type="molecule type" value="mRNA"/>
</dbReference>
<dbReference type="EMBL" id="BC029910">
    <property type="protein sequence ID" value="AAH29910.1"/>
    <property type="molecule type" value="mRNA"/>
</dbReference>
<dbReference type="EMBL" id="BC039954">
    <property type="protein sequence ID" value="AAH39954.1"/>
    <property type="molecule type" value="mRNA"/>
</dbReference>
<dbReference type="CCDS" id="CCDS36861.1"/>
<dbReference type="RefSeq" id="NP_001040898.1">
    <property type="nucleotide sequence ID" value="NM_001047433.2"/>
</dbReference>
<dbReference type="RefSeq" id="NP_001271275.1">
    <property type="nucleotide sequence ID" value="NM_001284346.1"/>
</dbReference>
<dbReference type="RefSeq" id="NP_758458.1">
    <property type="nucleotide sequence ID" value="NM_172254.4"/>
</dbReference>
<dbReference type="PDB" id="1WGE">
    <property type="method" value="NMR"/>
    <property type="chains" value="A=1-70"/>
</dbReference>
<dbReference type="PDBsum" id="1WGE"/>
<dbReference type="SMR" id="Q8K0W9"/>
<dbReference type="FunCoup" id="Q8K0W9">
    <property type="interactions" value="3816"/>
</dbReference>
<dbReference type="STRING" id="10090.ENSMUSP00000068491"/>
<dbReference type="iPTMnet" id="Q8K0W9"/>
<dbReference type="PhosphoSitePlus" id="Q8K0W9"/>
<dbReference type="PaxDb" id="10090-ENSMUSP00000068491"/>
<dbReference type="ProteomicsDB" id="279476"/>
<dbReference type="Antibodypedia" id="26896">
    <property type="antibodies" value="32 antibodies from 10 providers"/>
</dbReference>
<dbReference type="Ensembl" id="ENSMUST00000022461.11">
    <property type="protein sequence ID" value="ENSMUSP00000022461.5"/>
    <property type="gene ID" value="ENSMUSG00000021905.15"/>
</dbReference>
<dbReference type="Ensembl" id="ENSMUST00000067955.12">
    <property type="protein sequence ID" value="ENSMUSP00000068491.6"/>
    <property type="gene ID" value="ENSMUSG00000021905.15"/>
</dbReference>
<dbReference type="GeneID" id="105638"/>
<dbReference type="KEGG" id="mmu:105638"/>
<dbReference type="UCSC" id="uc007syc.2">
    <property type="organism name" value="mouse"/>
</dbReference>
<dbReference type="AGR" id="MGI:1922658"/>
<dbReference type="CTD" id="285381"/>
<dbReference type="MGI" id="MGI:1922658">
    <property type="gene designation" value="Dph3"/>
</dbReference>
<dbReference type="VEuPathDB" id="HostDB:ENSMUSG00000021905"/>
<dbReference type="eggNOG" id="KOG2923">
    <property type="taxonomic scope" value="Eukaryota"/>
</dbReference>
<dbReference type="GeneTree" id="ENSGT00390000007225"/>
<dbReference type="HOGENOM" id="CLU_155991_3_0_1"/>
<dbReference type="InParanoid" id="Q8K0W9"/>
<dbReference type="OMA" id="IYDPDMF"/>
<dbReference type="OrthoDB" id="66964at2759"/>
<dbReference type="PhylomeDB" id="Q8K0W9"/>
<dbReference type="TreeFam" id="TF315102"/>
<dbReference type="Reactome" id="R-MMU-5358493">
    <property type="pathway name" value="Synthesis of diphthamide-EEF2"/>
</dbReference>
<dbReference type="UniPathway" id="UPA00559"/>
<dbReference type="BioGRID-ORCS" id="105638">
    <property type="hits" value="16 hits in 67 CRISPR screens"/>
</dbReference>
<dbReference type="ChiTaRS" id="Dph3">
    <property type="organism name" value="mouse"/>
</dbReference>
<dbReference type="EvolutionaryTrace" id="Q8K0W9"/>
<dbReference type="PRO" id="PR:Q8K0W9"/>
<dbReference type="Proteomes" id="UP000000589">
    <property type="component" value="Chromosome 14"/>
</dbReference>
<dbReference type="RNAct" id="Q8K0W9">
    <property type="molecule type" value="protein"/>
</dbReference>
<dbReference type="Bgee" id="ENSMUSG00000021905">
    <property type="expression patterns" value="Expressed in blastoderm cell in morula and 231 other cell types or tissues"/>
</dbReference>
<dbReference type="ExpressionAtlas" id="Q8K0W9">
    <property type="expression patterns" value="baseline and differential"/>
</dbReference>
<dbReference type="GO" id="GO:0005737">
    <property type="term" value="C:cytoplasm"/>
    <property type="evidence" value="ECO:0000250"/>
    <property type="project" value="UniProtKB"/>
</dbReference>
<dbReference type="GO" id="GO:0005829">
    <property type="term" value="C:cytosol"/>
    <property type="evidence" value="ECO:0000314"/>
    <property type="project" value="MGI"/>
</dbReference>
<dbReference type="GO" id="GO:0005654">
    <property type="term" value="C:nucleoplasm"/>
    <property type="evidence" value="ECO:0007669"/>
    <property type="project" value="Ensembl"/>
</dbReference>
<dbReference type="GO" id="GO:0005634">
    <property type="term" value="C:nucleus"/>
    <property type="evidence" value="ECO:0000250"/>
    <property type="project" value="UniProtKB"/>
</dbReference>
<dbReference type="GO" id="GO:0048471">
    <property type="term" value="C:perinuclear region of cytoplasm"/>
    <property type="evidence" value="ECO:0000266"/>
    <property type="project" value="MGI"/>
</dbReference>
<dbReference type="GO" id="GO:0032991">
    <property type="term" value="C:protein-containing complex"/>
    <property type="evidence" value="ECO:0000314"/>
    <property type="project" value="MGI"/>
</dbReference>
<dbReference type="GO" id="GO:0009055">
    <property type="term" value="F:electron transfer activity"/>
    <property type="evidence" value="ECO:0000266"/>
    <property type="project" value="MGI"/>
</dbReference>
<dbReference type="GO" id="GO:0008198">
    <property type="term" value="F:ferrous iron binding"/>
    <property type="evidence" value="ECO:0000250"/>
    <property type="project" value="UniProtKB"/>
</dbReference>
<dbReference type="GO" id="GO:0034986">
    <property type="term" value="F:iron chaperone activity"/>
    <property type="evidence" value="ECO:0000250"/>
    <property type="project" value="UniProtKB"/>
</dbReference>
<dbReference type="GO" id="GO:0050709">
    <property type="term" value="P:negative regulation of protein secretion"/>
    <property type="evidence" value="ECO:0000250"/>
    <property type="project" value="UniProtKB"/>
</dbReference>
<dbReference type="GO" id="GO:0051099">
    <property type="term" value="P:positive regulation of binding"/>
    <property type="evidence" value="ECO:0000250"/>
    <property type="project" value="UniProtKB"/>
</dbReference>
<dbReference type="GO" id="GO:0017183">
    <property type="term" value="P:protein histidyl modification to diphthamide"/>
    <property type="evidence" value="ECO:0000315"/>
    <property type="project" value="UniProtKB"/>
</dbReference>
<dbReference type="GO" id="GO:0002926">
    <property type="term" value="P:tRNA wobble base 5-methoxycarbonylmethyl-2-thiouridinylation"/>
    <property type="evidence" value="ECO:0000250"/>
    <property type="project" value="UniProtKB"/>
</dbReference>
<dbReference type="FunFam" id="3.10.660.10:FF:000001">
    <property type="entry name" value="Diphthamide biosynthesis 3"/>
    <property type="match status" value="1"/>
</dbReference>
<dbReference type="Gene3D" id="3.10.660.10">
    <property type="entry name" value="DPH Zinc finger"/>
    <property type="match status" value="1"/>
</dbReference>
<dbReference type="InterPro" id="IPR044248">
    <property type="entry name" value="DPH3/4-like"/>
</dbReference>
<dbReference type="InterPro" id="IPR007872">
    <property type="entry name" value="DPH_MB_dom"/>
</dbReference>
<dbReference type="InterPro" id="IPR036671">
    <property type="entry name" value="DPH_MB_sf"/>
</dbReference>
<dbReference type="PANTHER" id="PTHR21454:SF31">
    <property type="entry name" value="DIPHTHAMIDE BIOSYNTHESIS PROTEIN 3"/>
    <property type="match status" value="1"/>
</dbReference>
<dbReference type="PANTHER" id="PTHR21454">
    <property type="entry name" value="DPH3 HOMOLOG-RELATED"/>
    <property type="match status" value="1"/>
</dbReference>
<dbReference type="Pfam" id="PF05207">
    <property type="entry name" value="Zn_ribbon_CSL"/>
    <property type="match status" value="1"/>
</dbReference>
<dbReference type="SUPFAM" id="SSF144217">
    <property type="entry name" value="CSL zinc finger"/>
    <property type="match status" value="1"/>
</dbReference>
<dbReference type="PROSITE" id="PS51074">
    <property type="entry name" value="DPH_MB"/>
    <property type="match status" value="1"/>
</dbReference>
<organism>
    <name type="scientific">Mus musculus</name>
    <name type="common">Mouse</name>
    <dbReference type="NCBI Taxonomy" id="10090"/>
    <lineage>
        <taxon>Eukaryota</taxon>
        <taxon>Metazoa</taxon>
        <taxon>Chordata</taxon>
        <taxon>Craniata</taxon>
        <taxon>Vertebrata</taxon>
        <taxon>Euteleostomi</taxon>
        <taxon>Mammalia</taxon>
        <taxon>Eutheria</taxon>
        <taxon>Euarchontoglires</taxon>
        <taxon>Glires</taxon>
        <taxon>Rodentia</taxon>
        <taxon>Myomorpha</taxon>
        <taxon>Muroidea</taxon>
        <taxon>Muridae</taxon>
        <taxon>Murinae</taxon>
        <taxon>Mus</taxon>
        <taxon>Mus</taxon>
    </lineage>
</organism>
<sequence length="82" mass="9286">MAVFHDEVEIEDFQYDEDSETYFYPCPCGDNFAITKEDLENGEDVATCPSCSLIIKVIYDKDQFMCGETVPAPSTNKELVKC</sequence>
<protein>
    <recommendedName>
        <fullName evidence="7">Diphthamide biosynthesis protein 3</fullName>
    </recommendedName>
    <alternativeName>
        <fullName>CSL-type zinc finger-containing protein 2</fullName>
    </alternativeName>
    <alternativeName>
        <fullName>DelGEF-interacting protein 1</fullName>
        <shortName>DelGIP1</shortName>
    </alternativeName>
</protein>
<evidence type="ECO:0000250" key="1">
    <source>
        <dbReference type="UniProtKB" id="Q3E840"/>
    </source>
</evidence>
<evidence type="ECO:0000250" key="2">
    <source>
        <dbReference type="UniProtKB" id="Q96FX2"/>
    </source>
</evidence>
<evidence type="ECO:0000255" key="3">
    <source>
        <dbReference type="PROSITE-ProRule" id="PRU00456"/>
    </source>
</evidence>
<evidence type="ECO:0000269" key="4">
    <source>
    </source>
</evidence>
<evidence type="ECO:0000269" key="5">
    <source>
    </source>
</evidence>
<evidence type="ECO:0000269" key="6">
    <source>
    </source>
</evidence>
<evidence type="ECO:0000303" key="7">
    <source>
    </source>
</evidence>
<evidence type="ECO:0000303" key="8">
    <source ref="6"/>
</evidence>
<evidence type="ECO:0000305" key="9"/>
<evidence type="ECO:0007829" key="10">
    <source>
        <dbReference type="PDB" id="1WGE"/>
    </source>
</evidence>
<proteinExistence type="evidence at protein level"/>